<gene>
    <name evidence="1" type="primary">ppa</name>
    <name type="ordered locus">PA4031</name>
</gene>
<comment type="function">
    <text evidence="1">Catalyzes the hydrolysis of inorganic pyrophosphate (PPi) forming two phosphate ions.</text>
</comment>
<comment type="catalytic activity">
    <reaction evidence="1">
        <text>diphosphate + H2O = 2 phosphate + H(+)</text>
        <dbReference type="Rhea" id="RHEA:24576"/>
        <dbReference type="ChEBI" id="CHEBI:15377"/>
        <dbReference type="ChEBI" id="CHEBI:15378"/>
        <dbReference type="ChEBI" id="CHEBI:33019"/>
        <dbReference type="ChEBI" id="CHEBI:43474"/>
        <dbReference type="EC" id="3.6.1.1"/>
    </reaction>
</comment>
<comment type="cofactor">
    <cofactor evidence="1">
        <name>Mg(2+)</name>
        <dbReference type="ChEBI" id="CHEBI:18420"/>
    </cofactor>
</comment>
<comment type="subunit">
    <text evidence="1">Homohexamer.</text>
</comment>
<comment type="subcellular location">
    <subcellularLocation>
        <location evidence="1">Cytoplasm</location>
    </subcellularLocation>
</comment>
<comment type="similarity">
    <text evidence="1">Belongs to the PPase family.</text>
</comment>
<sequence length="175" mass="19396">MSYSKIPAGKDLPNDIYVAIEIPANHAPIKYEIDKDTDCLFVDRFMATPMFYPANYGFIPNTLADDGDPLDVLVVTPYPVAPGSVIRARPVGVLHMTDEAGGDAKLIAVPHDKLSVLYKDVKEYTDLPALLLEQIKHFFENYKDLEKGKWVKVEGWGNADAARAEITKAVAAFQK</sequence>
<evidence type="ECO:0000255" key="1">
    <source>
        <dbReference type="HAMAP-Rule" id="MF_00209"/>
    </source>
</evidence>
<evidence type="ECO:0007829" key="2">
    <source>
        <dbReference type="PDB" id="4XEL"/>
    </source>
</evidence>
<accession>Q9HWZ6</accession>
<name>IPYR_PSEAE</name>
<keyword id="KW-0002">3D-structure</keyword>
<keyword id="KW-0963">Cytoplasm</keyword>
<keyword id="KW-0378">Hydrolase</keyword>
<keyword id="KW-0460">Magnesium</keyword>
<keyword id="KW-0479">Metal-binding</keyword>
<keyword id="KW-1185">Reference proteome</keyword>
<reference key="1">
    <citation type="journal article" date="2000" name="Nature">
        <title>Complete genome sequence of Pseudomonas aeruginosa PAO1, an opportunistic pathogen.</title>
        <authorList>
            <person name="Stover C.K."/>
            <person name="Pham X.-Q.T."/>
            <person name="Erwin A.L."/>
            <person name="Mizoguchi S.D."/>
            <person name="Warrener P."/>
            <person name="Hickey M.J."/>
            <person name="Brinkman F.S.L."/>
            <person name="Hufnagle W.O."/>
            <person name="Kowalik D.J."/>
            <person name="Lagrou M."/>
            <person name="Garber R.L."/>
            <person name="Goltry L."/>
            <person name="Tolentino E."/>
            <person name="Westbrock-Wadman S."/>
            <person name="Yuan Y."/>
            <person name="Brody L.L."/>
            <person name="Coulter S.N."/>
            <person name="Folger K.R."/>
            <person name="Kas A."/>
            <person name="Larbig K."/>
            <person name="Lim R.M."/>
            <person name="Smith K.A."/>
            <person name="Spencer D.H."/>
            <person name="Wong G.K.-S."/>
            <person name="Wu Z."/>
            <person name="Paulsen I.T."/>
            <person name="Reizer J."/>
            <person name="Saier M.H. Jr."/>
            <person name="Hancock R.E.W."/>
            <person name="Lory S."/>
            <person name="Olson M.V."/>
        </authorList>
    </citation>
    <scope>NUCLEOTIDE SEQUENCE [LARGE SCALE GENOMIC DNA]</scope>
    <source>
        <strain>ATCC 15692 / DSM 22644 / CIP 104116 / JCM 14847 / LMG 12228 / 1C / PRS 101 / PAO1</strain>
    </source>
</reference>
<dbReference type="EC" id="3.6.1.1" evidence="1"/>
<dbReference type="EMBL" id="AE004091">
    <property type="protein sequence ID" value="AAG07418.1"/>
    <property type="molecule type" value="Genomic_DNA"/>
</dbReference>
<dbReference type="PIR" id="C83141">
    <property type="entry name" value="C83141"/>
</dbReference>
<dbReference type="RefSeq" id="NP_252720.1">
    <property type="nucleotide sequence ID" value="NC_002516.2"/>
</dbReference>
<dbReference type="RefSeq" id="WP_003093248.1">
    <property type="nucleotide sequence ID" value="NZ_QZGE01000013.1"/>
</dbReference>
<dbReference type="PDB" id="4XEL">
    <property type="method" value="X-ray"/>
    <property type="resolution" value="2.00 A"/>
    <property type="chains" value="A/B=1-175"/>
</dbReference>
<dbReference type="PDBsum" id="4XEL"/>
<dbReference type="SMR" id="Q9HWZ6"/>
<dbReference type="FunCoup" id="Q9HWZ6">
    <property type="interactions" value="426"/>
</dbReference>
<dbReference type="STRING" id="208964.PA4031"/>
<dbReference type="PaxDb" id="208964-PA4031"/>
<dbReference type="GeneID" id="77219425"/>
<dbReference type="GeneID" id="879025"/>
<dbReference type="KEGG" id="pae:PA4031"/>
<dbReference type="PATRIC" id="fig|208964.12.peg.4222"/>
<dbReference type="PseudoCAP" id="PA4031"/>
<dbReference type="HOGENOM" id="CLU_073198_1_0_6"/>
<dbReference type="InParanoid" id="Q9HWZ6"/>
<dbReference type="OrthoDB" id="5187599at2"/>
<dbReference type="PhylomeDB" id="Q9HWZ6"/>
<dbReference type="BioCyc" id="PAER208964:G1FZ6-4104-MONOMER"/>
<dbReference type="EvolutionaryTrace" id="Q9HWZ6"/>
<dbReference type="Proteomes" id="UP000002438">
    <property type="component" value="Chromosome"/>
</dbReference>
<dbReference type="GO" id="GO:0005829">
    <property type="term" value="C:cytosol"/>
    <property type="evidence" value="ECO:0000318"/>
    <property type="project" value="GO_Central"/>
</dbReference>
<dbReference type="GO" id="GO:0005615">
    <property type="term" value="C:extracellular space"/>
    <property type="evidence" value="ECO:0000314"/>
    <property type="project" value="PseudoCAP"/>
</dbReference>
<dbReference type="GO" id="GO:0004427">
    <property type="term" value="F:inorganic diphosphate phosphatase activity"/>
    <property type="evidence" value="ECO:0000318"/>
    <property type="project" value="GO_Central"/>
</dbReference>
<dbReference type="GO" id="GO:0000287">
    <property type="term" value="F:magnesium ion binding"/>
    <property type="evidence" value="ECO:0000318"/>
    <property type="project" value="GO_Central"/>
</dbReference>
<dbReference type="GO" id="GO:0006796">
    <property type="term" value="P:phosphate-containing compound metabolic process"/>
    <property type="evidence" value="ECO:0000318"/>
    <property type="project" value="GO_Central"/>
</dbReference>
<dbReference type="CDD" id="cd00412">
    <property type="entry name" value="pyrophosphatase"/>
    <property type="match status" value="1"/>
</dbReference>
<dbReference type="FunFam" id="3.90.80.10:FF:000001">
    <property type="entry name" value="Inorganic pyrophosphatase"/>
    <property type="match status" value="1"/>
</dbReference>
<dbReference type="Gene3D" id="3.90.80.10">
    <property type="entry name" value="Inorganic pyrophosphatase"/>
    <property type="match status" value="1"/>
</dbReference>
<dbReference type="HAMAP" id="MF_00209">
    <property type="entry name" value="Inorganic_PPase"/>
    <property type="match status" value="1"/>
</dbReference>
<dbReference type="InterPro" id="IPR008162">
    <property type="entry name" value="Pyrophosphatase"/>
</dbReference>
<dbReference type="InterPro" id="IPR036649">
    <property type="entry name" value="Pyrophosphatase_sf"/>
</dbReference>
<dbReference type="NCBIfam" id="NF002317">
    <property type="entry name" value="PRK01250.1"/>
    <property type="match status" value="1"/>
</dbReference>
<dbReference type="PANTHER" id="PTHR10286">
    <property type="entry name" value="INORGANIC PYROPHOSPHATASE"/>
    <property type="match status" value="1"/>
</dbReference>
<dbReference type="Pfam" id="PF00719">
    <property type="entry name" value="Pyrophosphatase"/>
    <property type="match status" value="1"/>
</dbReference>
<dbReference type="SUPFAM" id="SSF50324">
    <property type="entry name" value="Inorganic pyrophosphatase"/>
    <property type="match status" value="1"/>
</dbReference>
<dbReference type="PROSITE" id="PS00387">
    <property type="entry name" value="PPASE"/>
    <property type="match status" value="1"/>
</dbReference>
<feature type="chain" id="PRO_0000137517" description="Inorganic pyrophosphatase">
    <location>
        <begin position="1"/>
        <end position="175"/>
    </location>
</feature>
<feature type="binding site" evidence="1">
    <location>
        <position position="30"/>
    </location>
    <ligand>
        <name>substrate</name>
    </ligand>
</feature>
<feature type="binding site" evidence="1">
    <location>
        <position position="44"/>
    </location>
    <ligand>
        <name>substrate</name>
    </ligand>
</feature>
<feature type="binding site" evidence="1">
    <location>
        <position position="56"/>
    </location>
    <ligand>
        <name>substrate</name>
    </ligand>
</feature>
<feature type="binding site" evidence="1">
    <location>
        <position position="66"/>
    </location>
    <ligand>
        <name>Mg(2+)</name>
        <dbReference type="ChEBI" id="CHEBI:18420"/>
        <label>1</label>
    </ligand>
</feature>
<feature type="binding site" evidence="1">
    <location>
        <position position="71"/>
    </location>
    <ligand>
        <name>Mg(2+)</name>
        <dbReference type="ChEBI" id="CHEBI:18420"/>
        <label>1</label>
    </ligand>
</feature>
<feature type="binding site" evidence="1">
    <location>
        <position position="71"/>
    </location>
    <ligand>
        <name>Mg(2+)</name>
        <dbReference type="ChEBI" id="CHEBI:18420"/>
        <label>2</label>
    </ligand>
</feature>
<feature type="binding site" evidence="1">
    <location>
        <position position="103"/>
    </location>
    <ligand>
        <name>Mg(2+)</name>
        <dbReference type="ChEBI" id="CHEBI:18420"/>
        <label>1</label>
    </ligand>
</feature>
<feature type="binding site" evidence="1">
    <location>
        <position position="142"/>
    </location>
    <ligand>
        <name>substrate</name>
    </ligand>
</feature>
<feature type="turn" evidence="2">
    <location>
        <begin position="12"/>
        <end position="14"/>
    </location>
</feature>
<feature type="strand" evidence="2">
    <location>
        <begin position="15"/>
        <end position="22"/>
    </location>
</feature>
<feature type="strand" evidence="2">
    <location>
        <begin position="28"/>
        <end position="33"/>
    </location>
</feature>
<feature type="turn" evidence="2">
    <location>
        <begin position="35"/>
        <end position="37"/>
    </location>
</feature>
<feature type="strand" evidence="2">
    <location>
        <begin position="40"/>
        <end position="45"/>
    </location>
</feature>
<feature type="strand" evidence="2">
    <location>
        <begin position="53"/>
        <end position="58"/>
    </location>
</feature>
<feature type="strand" evidence="2">
    <location>
        <begin position="71"/>
        <end position="74"/>
    </location>
</feature>
<feature type="strand" evidence="2">
    <location>
        <begin position="85"/>
        <end position="98"/>
    </location>
</feature>
<feature type="strand" evidence="2">
    <location>
        <begin position="105"/>
        <end position="110"/>
    </location>
</feature>
<feature type="turn" evidence="2">
    <location>
        <begin position="112"/>
        <end position="114"/>
    </location>
</feature>
<feature type="turn" evidence="2">
    <location>
        <begin position="117"/>
        <end position="120"/>
    </location>
</feature>
<feature type="helix" evidence="2">
    <location>
        <begin position="124"/>
        <end position="126"/>
    </location>
</feature>
<feature type="helix" evidence="2">
    <location>
        <begin position="129"/>
        <end position="139"/>
    </location>
</feature>
<feature type="strand" evidence="2">
    <location>
        <begin position="152"/>
        <end position="157"/>
    </location>
</feature>
<feature type="helix" evidence="2">
    <location>
        <begin position="159"/>
        <end position="174"/>
    </location>
</feature>
<organism>
    <name type="scientific">Pseudomonas aeruginosa (strain ATCC 15692 / DSM 22644 / CIP 104116 / JCM 14847 / LMG 12228 / 1C / PRS 101 / PAO1)</name>
    <dbReference type="NCBI Taxonomy" id="208964"/>
    <lineage>
        <taxon>Bacteria</taxon>
        <taxon>Pseudomonadati</taxon>
        <taxon>Pseudomonadota</taxon>
        <taxon>Gammaproteobacteria</taxon>
        <taxon>Pseudomonadales</taxon>
        <taxon>Pseudomonadaceae</taxon>
        <taxon>Pseudomonas</taxon>
    </lineage>
</organism>
<protein>
    <recommendedName>
        <fullName evidence="1">Inorganic pyrophosphatase</fullName>
        <ecNumber evidence="1">3.6.1.1</ecNumber>
    </recommendedName>
    <alternativeName>
        <fullName evidence="1">Pyrophosphate phospho-hydrolase</fullName>
        <shortName evidence="1">PPase</shortName>
    </alternativeName>
</protein>
<proteinExistence type="evidence at protein level"/>